<gene>
    <name evidence="1" type="primary">rpmC</name>
    <name type="ordered locus">FTT_0333</name>
</gene>
<dbReference type="EMBL" id="AJ749949">
    <property type="protein sequence ID" value="CAG44966.1"/>
    <property type="molecule type" value="Genomic_DNA"/>
</dbReference>
<dbReference type="RefSeq" id="WP_003017801.1">
    <property type="nucleotide sequence ID" value="NZ_CP010290.1"/>
</dbReference>
<dbReference type="RefSeq" id="YP_169382.1">
    <property type="nucleotide sequence ID" value="NC_006570.2"/>
</dbReference>
<dbReference type="SMR" id="Q5NHW0"/>
<dbReference type="STRING" id="177416.FTT_0333"/>
<dbReference type="DNASU" id="3191993"/>
<dbReference type="EnsemblBacteria" id="CAG44966">
    <property type="protein sequence ID" value="CAG44966"/>
    <property type="gene ID" value="FTT_0333"/>
</dbReference>
<dbReference type="GeneID" id="75264253"/>
<dbReference type="KEGG" id="ftu:FTT_0333"/>
<dbReference type="eggNOG" id="COG0255">
    <property type="taxonomic scope" value="Bacteria"/>
</dbReference>
<dbReference type="OrthoDB" id="9815192at2"/>
<dbReference type="Proteomes" id="UP000001174">
    <property type="component" value="Chromosome"/>
</dbReference>
<dbReference type="GO" id="GO:0022625">
    <property type="term" value="C:cytosolic large ribosomal subunit"/>
    <property type="evidence" value="ECO:0007669"/>
    <property type="project" value="TreeGrafter"/>
</dbReference>
<dbReference type="GO" id="GO:0003735">
    <property type="term" value="F:structural constituent of ribosome"/>
    <property type="evidence" value="ECO:0007669"/>
    <property type="project" value="InterPro"/>
</dbReference>
<dbReference type="GO" id="GO:0006412">
    <property type="term" value="P:translation"/>
    <property type="evidence" value="ECO:0007669"/>
    <property type="project" value="UniProtKB-UniRule"/>
</dbReference>
<dbReference type="CDD" id="cd00427">
    <property type="entry name" value="Ribosomal_L29_HIP"/>
    <property type="match status" value="1"/>
</dbReference>
<dbReference type="Gene3D" id="6.10.140.1970">
    <property type="match status" value="1"/>
</dbReference>
<dbReference type="HAMAP" id="MF_00374">
    <property type="entry name" value="Ribosomal_uL29"/>
    <property type="match status" value="1"/>
</dbReference>
<dbReference type="InterPro" id="IPR050063">
    <property type="entry name" value="Ribosomal_protein_uL29"/>
</dbReference>
<dbReference type="InterPro" id="IPR001854">
    <property type="entry name" value="Ribosomal_uL29"/>
</dbReference>
<dbReference type="InterPro" id="IPR018254">
    <property type="entry name" value="Ribosomal_uL29_CS"/>
</dbReference>
<dbReference type="InterPro" id="IPR036049">
    <property type="entry name" value="Ribosomal_uL29_sf"/>
</dbReference>
<dbReference type="NCBIfam" id="TIGR00012">
    <property type="entry name" value="L29"/>
    <property type="match status" value="1"/>
</dbReference>
<dbReference type="PANTHER" id="PTHR10916">
    <property type="entry name" value="60S RIBOSOMAL PROTEIN L35/50S RIBOSOMAL PROTEIN L29"/>
    <property type="match status" value="1"/>
</dbReference>
<dbReference type="PANTHER" id="PTHR10916:SF0">
    <property type="entry name" value="LARGE RIBOSOMAL SUBUNIT PROTEIN UL29C"/>
    <property type="match status" value="1"/>
</dbReference>
<dbReference type="Pfam" id="PF00831">
    <property type="entry name" value="Ribosomal_L29"/>
    <property type="match status" value="1"/>
</dbReference>
<dbReference type="SUPFAM" id="SSF46561">
    <property type="entry name" value="Ribosomal protein L29 (L29p)"/>
    <property type="match status" value="1"/>
</dbReference>
<dbReference type="PROSITE" id="PS00579">
    <property type="entry name" value="RIBOSOMAL_L29"/>
    <property type="match status" value="1"/>
</dbReference>
<keyword id="KW-1185">Reference proteome</keyword>
<keyword id="KW-0687">Ribonucleoprotein</keyword>
<keyword id="KW-0689">Ribosomal protein</keyword>
<name>RL29_FRATT</name>
<feature type="chain" id="PRO_0000130391" description="Large ribosomal subunit protein uL29">
    <location>
        <begin position="1"/>
        <end position="66"/>
    </location>
</feature>
<sequence length="66" mass="7773">MKRKDTLKDYRGKSIDQLQEAKIELLQQLFSLRMQKGTGQLKKNHLFKSAKRDIARINTIISEKNK</sequence>
<protein>
    <recommendedName>
        <fullName evidence="1">Large ribosomal subunit protein uL29</fullName>
    </recommendedName>
    <alternativeName>
        <fullName evidence="2">50S ribosomal protein L29</fullName>
    </alternativeName>
</protein>
<reference key="1">
    <citation type="journal article" date="2005" name="Nat. Genet.">
        <title>The complete genome sequence of Francisella tularensis, the causative agent of tularemia.</title>
        <authorList>
            <person name="Larsson P."/>
            <person name="Oyston P.C.F."/>
            <person name="Chain P."/>
            <person name="Chu M.C."/>
            <person name="Duffield M."/>
            <person name="Fuxelius H.-H."/>
            <person name="Garcia E."/>
            <person name="Haelltorp G."/>
            <person name="Johansson D."/>
            <person name="Isherwood K.E."/>
            <person name="Karp P.D."/>
            <person name="Larsson E."/>
            <person name="Liu Y."/>
            <person name="Michell S."/>
            <person name="Prior J."/>
            <person name="Prior R."/>
            <person name="Malfatti S."/>
            <person name="Sjoestedt A."/>
            <person name="Svensson K."/>
            <person name="Thompson N."/>
            <person name="Vergez L."/>
            <person name="Wagg J.K."/>
            <person name="Wren B.W."/>
            <person name="Lindler L.E."/>
            <person name="Andersson S.G.E."/>
            <person name="Forsman M."/>
            <person name="Titball R.W."/>
        </authorList>
    </citation>
    <scope>NUCLEOTIDE SEQUENCE [LARGE SCALE GENOMIC DNA]</scope>
    <source>
        <strain>SCHU S4 / Schu 4</strain>
    </source>
</reference>
<evidence type="ECO:0000255" key="1">
    <source>
        <dbReference type="HAMAP-Rule" id="MF_00374"/>
    </source>
</evidence>
<evidence type="ECO:0000305" key="2"/>
<comment type="similarity">
    <text evidence="1">Belongs to the universal ribosomal protein uL29 family.</text>
</comment>
<organism>
    <name type="scientific">Francisella tularensis subsp. tularensis (strain SCHU S4 / Schu 4)</name>
    <dbReference type="NCBI Taxonomy" id="177416"/>
    <lineage>
        <taxon>Bacteria</taxon>
        <taxon>Pseudomonadati</taxon>
        <taxon>Pseudomonadota</taxon>
        <taxon>Gammaproteobacteria</taxon>
        <taxon>Thiotrichales</taxon>
        <taxon>Francisellaceae</taxon>
        <taxon>Francisella</taxon>
    </lineage>
</organism>
<accession>Q5NHW0</accession>
<proteinExistence type="inferred from homology"/>